<organism>
    <name type="scientific">Drosophila melanogaster</name>
    <name type="common">Fruit fly</name>
    <dbReference type="NCBI Taxonomy" id="7227"/>
    <lineage>
        <taxon>Eukaryota</taxon>
        <taxon>Metazoa</taxon>
        <taxon>Ecdysozoa</taxon>
        <taxon>Arthropoda</taxon>
        <taxon>Hexapoda</taxon>
        <taxon>Insecta</taxon>
        <taxon>Pterygota</taxon>
        <taxon>Neoptera</taxon>
        <taxon>Endopterygota</taxon>
        <taxon>Diptera</taxon>
        <taxon>Brachycera</taxon>
        <taxon>Muscomorpha</taxon>
        <taxon>Ephydroidea</taxon>
        <taxon>Drosophilidae</taxon>
        <taxon>Drosophila</taxon>
        <taxon>Sophophora</taxon>
    </lineage>
</organism>
<evidence type="ECO:0000250" key="1"/>
<evidence type="ECO:0000305" key="2"/>
<evidence type="ECO:0000312" key="3">
    <source>
        <dbReference type="FlyBase" id="FBgn0026634"/>
    </source>
</evidence>
<proteinExistence type="evidence at transcript level"/>
<dbReference type="EMBL" id="AF132535">
    <property type="protein sequence ID" value="AAD31443.1"/>
    <property type="molecule type" value="Genomic_DNA"/>
</dbReference>
<dbReference type="EMBL" id="AF132532">
    <property type="protein sequence ID" value="AAD31443.1"/>
    <property type="status" value="JOINED"/>
    <property type="molecule type" value="Genomic_DNA"/>
</dbReference>
<dbReference type="EMBL" id="AF132533">
    <property type="protein sequence ID" value="AAD31443.1"/>
    <property type="status" value="JOINED"/>
    <property type="molecule type" value="Genomic_DNA"/>
</dbReference>
<dbReference type="EMBL" id="AF132534">
    <property type="protein sequence ID" value="AAD31443.1"/>
    <property type="status" value="JOINED"/>
    <property type="molecule type" value="Genomic_DNA"/>
</dbReference>
<dbReference type="EMBL" id="AE014297">
    <property type="protein sequence ID" value="AAF55182.1"/>
    <property type="molecule type" value="Genomic_DNA"/>
</dbReference>
<dbReference type="EMBL" id="AY070962">
    <property type="protein sequence ID" value="AAL48584.1"/>
    <property type="molecule type" value="mRNA"/>
</dbReference>
<dbReference type="RefSeq" id="NP_524366.1">
    <property type="nucleotide sequence ID" value="NM_079642.3"/>
</dbReference>
<dbReference type="SMR" id="Q9VF78"/>
<dbReference type="BioGRID" id="66933">
    <property type="interactions" value="1"/>
</dbReference>
<dbReference type="ComplexPortal" id="CPX-2794">
    <property type="entry name" value="COG tethering complex"/>
</dbReference>
<dbReference type="DIP" id="DIP-23947N"/>
<dbReference type="FunCoup" id="Q9VF78">
    <property type="interactions" value="2108"/>
</dbReference>
<dbReference type="STRING" id="7227.FBpp0082568"/>
<dbReference type="PaxDb" id="7227-FBpp0082568"/>
<dbReference type="EnsemblMetazoa" id="FBtr0083114">
    <property type="protein sequence ID" value="FBpp0082568"/>
    <property type="gene ID" value="FBgn0026634"/>
</dbReference>
<dbReference type="GeneID" id="41870"/>
<dbReference type="KEGG" id="dme:Dmel_CG6177"/>
<dbReference type="AGR" id="FB:FBgn0026634"/>
<dbReference type="CTD" id="22796"/>
<dbReference type="FlyBase" id="FBgn0026634">
    <property type="gene designation" value="Cog2"/>
</dbReference>
<dbReference type="VEuPathDB" id="VectorBase:FBgn0026634"/>
<dbReference type="eggNOG" id="KOG2307">
    <property type="taxonomic scope" value="Eukaryota"/>
</dbReference>
<dbReference type="GeneTree" id="ENSGT00390000012040"/>
<dbReference type="HOGENOM" id="CLU_005470_1_0_1"/>
<dbReference type="InParanoid" id="Q9VF78"/>
<dbReference type="OMA" id="CWAEGVY"/>
<dbReference type="OrthoDB" id="332281at2759"/>
<dbReference type="PhylomeDB" id="Q9VF78"/>
<dbReference type="Reactome" id="R-DME-6807878">
    <property type="pathway name" value="COPI-mediated anterograde transport"/>
</dbReference>
<dbReference type="Reactome" id="R-DME-6811438">
    <property type="pathway name" value="Intra-Golgi traffic"/>
</dbReference>
<dbReference type="Reactome" id="R-DME-6811440">
    <property type="pathway name" value="Retrograde transport at the Trans-Golgi-Network"/>
</dbReference>
<dbReference type="BioGRID-ORCS" id="41870">
    <property type="hits" value="0 hits in 1 CRISPR screen"/>
</dbReference>
<dbReference type="ChiTaRS" id="ldlCp">
    <property type="organism name" value="fly"/>
</dbReference>
<dbReference type="GenomeRNAi" id="41870"/>
<dbReference type="PRO" id="PR:Q9VF78"/>
<dbReference type="Proteomes" id="UP000000803">
    <property type="component" value="Chromosome 3R"/>
</dbReference>
<dbReference type="Bgee" id="FBgn0026634">
    <property type="expression patterns" value="Expressed in adult oenocyte (Drosophila) in body wall and 75 other cell types or tissues"/>
</dbReference>
<dbReference type="GO" id="GO:0000139">
    <property type="term" value="C:Golgi membrane"/>
    <property type="evidence" value="ECO:0007669"/>
    <property type="project" value="UniProtKB-SubCell"/>
</dbReference>
<dbReference type="GO" id="GO:0017119">
    <property type="term" value="C:Golgi transport complex"/>
    <property type="evidence" value="ECO:0000314"/>
    <property type="project" value="FlyBase"/>
</dbReference>
<dbReference type="GO" id="GO:0007030">
    <property type="term" value="P:Golgi organization"/>
    <property type="evidence" value="ECO:0000250"/>
    <property type="project" value="UniProtKB"/>
</dbReference>
<dbReference type="GO" id="GO:0006891">
    <property type="term" value="P:intra-Golgi vesicle-mediated transport"/>
    <property type="evidence" value="ECO:0000250"/>
    <property type="project" value="UniProtKB"/>
</dbReference>
<dbReference type="GO" id="GO:0015031">
    <property type="term" value="P:protein transport"/>
    <property type="evidence" value="ECO:0007669"/>
    <property type="project" value="UniProtKB-KW"/>
</dbReference>
<dbReference type="InterPro" id="IPR009316">
    <property type="entry name" value="COG2"/>
</dbReference>
<dbReference type="InterPro" id="IPR024603">
    <property type="entry name" value="COG_complex_COG2_C"/>
</dbReference>
<dbReference type="InterPro" id="IPR024602">
    <property type="entry name" value="COG_su2_N"/>
</dbReference>
<dbReference type="PANTHER" id="PTHR12961">
    <property type="entry name" value="CONSERVED OLIGOMERIC GOLGI COMPLEX COMPONENT 2"/>
    <property type="match status" value="1"/>
</dbReference>
<dbReference type="PANTHER" id="PTHR12961:SF0">
    <property type="entry name" value="CONSERVED OLIGOMERIC GOLGI COMPLEX SUBUNIT 2"/>
    <property type="match status" value="1"/>
</dbReference>
<dbReference type="Pfam" id="PF12022">
    <property type="entry name" value="COG2_C"/>
    <property type="match status" value="1"/>
</dbReference>
<dbReference type="Pfam" id="PF06148">
    <property type="entry name" value="COG2_N"/>
    <property type="match status" value="1"/>
</dbReference>
<feature type="chain" id="PRO_0000213498" description="Conserved oligomeric Golgi complex subunit 2">
    <location>
        <begin position="1"/>
        <end position="710"/>
    </location>
</feature>
<feature type="sequence conflict" description="In Ref. 1; AAD31443." evidence="2" ref="1">
    <original>EQLR</original>
    <variation>DDVL</variation>
    <location>
        <begin position="50"/>
        <end position="53"/>
    </location>
</feature>
<feature type="sequence conflict" description="In Ref. 1; AAD31443." evidence="2" ref="1">
    <original>QL</original>
    <variation>HV</variation>
    <location>
        <begin position="129"/>
        <end position="130"/>
    </location>
</feature>
<feature type="sequence conflict" description="In Ref. 4; AAL48584." evidence="2" ref="4">
    <original>K</original>
    <variation>R</variation>
    <location>
        <position position="184"/>
    </location>
</feature>
<feature type="sequence conflict" description="In Ref. 1; AAD31443." evidence="2" ref="1">
    <original>D</original>
    <variation>E</variation>
    <location>
        <position position="193"/>
    </location>
</feature>
<feature type="sequence conflict" description="In Ref. 1; AAD31443." evidence="2" ref="1">
    <original>LL</original>
    <variation>FV</variation>
    <location>
        <begin position="291"/>
        <end position="292"/>
    </location>
</feature>
<feature type="sequence conflict" description="In Ref. 1; AAD31443." evidence="2" ref="1">
    <original>NS</original>
    <variation>EF</variation>
    <location>
        <begin position="324"/>
        <end position="325"/>
    </location>
</feature>
<feature type="sequence conflict" description="In Ref. 1; AAD31443." evidence="2" ref="1">
    <original>V</original>
    <variation>E</variation>
    <location>
        <position position="401"/>
    </location>
</feature>
<feature type="sequence conflict" description="In Ref. 1; AAD31443." evidence="2" ref="1">
    <original>C</original>
    <variation>R</variation>
    <location>
        <position position="512"/>
    </location>
</feature>
<feature type="sequence conflict" description="In Ref. 1; AAD31443." evidence="2" ref="1">
    <original>G</original>
    <variation>A</variation>
    <location>
        <position position="548"/>
    </location>
</feature>
<feature type="sequence conflict" description="In Ref. 1; AAD31443." evidence="2" ref="1">
    <original>AA</original>
    <variation>PR</variation>
    <location>
        <begin position="647"/>
        <end position="648"/>
    </location>
</feature>
<feature type="sequence conflict" description="In Ref. 4; AAL48584." evidence="2" ref="4">
    <original>M</original>
    <variation>V</variation>
    <location>
        <position position="698"/>
    </location>
</feature>
<reference key="1">
    <citation type="submission" date="1999-03" db="EMBL/GenBank/DDBJ databases">
        <title>Drosophila melanogaster gene for ldlCp-related protein.</title>
        <authorList>
            <person name="Fyrberg E.A."/>
            <person name="Fyrberg C.C."/>
        </authorList>
    </citation>
    <scope>NUCLEOTIDE SEQUENCE [GENOMIC DNA]</scope>
</reference>
<reference key="2">
    <citation type="journal article" date="2000" name="Science">
        <title>The genome sequence of Drosophila melanogaster.</title>
        <authorList>
            <person name="Adams M.D."/>
            <person name="Celniker S.E."/>
            <person name="Holt R.A."/>
            <person name="Evans C.A."/>
            <person name="Gocayne J.D."/>
            <person name="Amanatides P.G."/>
            <person name="Scherer S.E."/>
            <person name="Li P.W."/>
            <person name="Hoskins R.A."/>
            <person name="Galle R.F."/>
            <person name="George R.A."/>
            <person name="Lewis S.E."/>
            <person name="Richards S."/>
            <person name="Ashburner M."/>
            <person name="Henderson S.N."/>
            <person name="Sutton G.G."/>
            <person name="Wortman J.R."/>
            <person name="Yandell M.D."/>
            <person name="Zhang Q."/>
            <person name="Chen L.X."/>
            <person name="Brandon R.C."/>
            <person name="Rogers Y.-H.C."/>
            <person name="Blazej R.G."/>
            <person name="Champe M."/>
            <person name="Pfeiffer B.D."/>
            <person name="Wan K.H."/>
            <person name="Doyle C."/>
            <person name="Baxter E.G."/>
            <person name="Helt G."/>
            <person name="Nelson C.R."/>
            <person name="Miklos G.L.G."/>
            <person name="Abril J.F."/>
            <person name="Agbayani A."/>
            <person name="An H.-J."/>
            <person name="Andrews-Pfannkoch C."/>
            <person name="Baldwin D."/>
            <person name="Ballew R.M."/>
            <person name="Basu A."/>
            <person name="Baxendale J."/>
            <person name="Bayraktaroglu L."/>
            <person name="Beasley E.M."/>
            <person name="Beeson K.Y."/>
            <person name="Benos P.V."/>
            <person name="Berman B.P."/>
            <person name="Bhandari D."/>
            <person name="Bolshakov S."/>
            <person name="Borkova D."/>
            <person name="Botchan M.R."/>
            <person name="Bouck J."/>
            <person name="Brokstein P."/>
            <person name="Brottier P."/>
            <person name="Burtis K.C."/>
            <person name="Busam D.A."/>
            <person name="Butler H."/>
            <person name="Cadieu E."/>
            <person name="Center A."/>
            <person name="Chandra I."/>
            <person name="Cherry J.M."/>
            <person name="Cawley S."/>
            <person name="Dahlke C."/>
            <person name="Davenport L.B."/>
            <person name="Davies P."/>
            <person name="de Pablos B."/>
            <person name="Delcher A."/>
            <person name="Deng Z."/>
            <person name="Mays A.D."/>
            <person name="Dew I."/>
            <person name="Dietz S.M."/>
            <person name="Dodson K."/>
            <person name="Doup L.E."/>
            <person name="Downes M."/>
            <person name="Dugan-Rocha S."/>
            <person name="Dunkov B.C."/>
            <person name="Dunn P."/>
            <person name="Durbin K.J."/>
            <person name="Evangelista C.C."/>
            <person name="Ferraz C."/>
            <person name="Ferriera S."/>
            <person name="Fleischmann W."/>
            <person name="Fosler C."/>
            <person name="Gabrielian A.E."/>
            <person name="Garg N.S."/>
            <person name="Gelbart W.M."/>
            <person name="Glasser K."/>
            <person name="Glodek A."/>
            <person name="Gong F."/>
            <person name="Gorrell J.H."/>
            <person name="Gu Z."/>
            <person name="Guan P."/>
            <person name="Harris M."/>
            <person name="Harris N.L."/>
            <person name="Harvey D.A."/>
            <person name="Heiman T.J."/>
            <person name="Hernandez J.R."/>
            <person name="Houck J."/>
            <person name="Hostin D."/>
            <person name="Houston K.A."/>
            <person name="Howland T.J."/>
            <person name="Wei M.-H."/>
            <person name="Ibegwam C."/>
            <person name="Jalali M."/>
            <person name="Kalush F."/>
            <person name="Karpen G.H."/>
            <person name="Ke Z."/>
            <person name="Kennison J.A."/>
            <person name="Ketchum K.A."/>
            <person name="Kimmel B.E."/>
            <person name="Kodira C.D."/>
            <person name="Kraft C.L."/>
            <person name="Kravitz S."/>
            <person name="Kulp D."/>
            <person name="Lai Z."/>
            <person name="Lasko P."/>
            <person name="Lei Y."/>
            <person name="Levitsky A.A."/>
            <person name="Li J.H."/>
            <person name="Li Z."/>
            <person name="Liang Y."/>
            <person name="Lin X."/>
            <person name="Liu X."/>
            <person name="Mattei B."/>
            <person name="McIntosh T.C."/>
            <person name="McLeod M.P."/>
            <person name="McPherson D."/>
            <person name="Merkulov G."/>
            <person name="Milshina N.V."/>
            <person name="Mobarry C."/>
            <person name="Morris J."/>
            <person name="Moshrefi A."/>
            <person name="Mount S.M."/>
            <person name="Moy M."/>
            <person name="Murphy B."/>
            <person name="Murphy L."/>
            <person name="Muzny D.M."/>
            <person name="Nelson D.L."/>
            <person name="Nelson D.R."/>
            <person name="Nelson K.A."/>
            <person name="Nixon K."/>
            <person name="Nusskern D.R."/>
            <person name="Pacleb J.M."/>
            <person name="Palazzolo M."/>
            <person name="Pittman G.S."/>
            <person name="Pan S."/>
            <person name="Pollard J."/>
            <person name="Puri V."/>
            <person name="Reese M.G."/>
            <person name="Reinert K."/>
            <person name="Remington K."/>
            <person name="Saunders R.D.C."/>
            <person name="Scheeler F."/>
            <person name="Shen H."/>
            <person name="Shue B.C."/>
            <person name="Siden-Kiamos I."/>
            <person name="Simpson M."/>
            <person name="Skupski M.P."/>
            <person name="Smith T.J."/>
            <person name="Spier E."/>
            <person name="Spradling A.C."/>
            <person name="Stapleton M."/>
            <person name="Strong R."/>
            <person name="Sun E."/>
            <person name="Svirskas R."/>
            <person name="Tector C."/>
            <person name="Turner R."/>
            <person name="Venter E."/>
            <person name="Wang A.H."/>
            <person name="Wang X."/>
            <person name="Wang Z.-Y."/>
            <person name="Wassarman D.A."/>
            <person name="Weinstock G.M."/>
            <person name="Weissenbach J."/>
            <person name="Williams S.M."/>
            <person name="Woodage T."/>
            <person name="Worley K.C."/>
            <person name="Wu D."/>
            <person name="Yang S."/>
            <person name="Yao Q.A."/>
            <person name="Ye J."/>
            <person name="Yeh R.-F."/>
            <person name="Zaveri J.S."/>
            <person name="Zhan M."/>
            <person name="Zhang G."/>
            <person name="Zhao Q."/>
            <person name="Zheng L."/>
            <person name="Zheng X.H."/>
            <person name="Zhong F.N."/>
            <person name="Zhong W."/>
            <person name="Zhou X."/>
            <person name="Zhu S.C."/>
            <person name="Zhu X."/>
            <person name="Smith H.O."/>
            <person name="Gibbs R.A."/>
            <person name="Myers E.W."/>
            <person name="Rubin G.M."/>
            <person name="Venter J.C."/>
        </authorList>
    </citation>
    <scope>NUCLEOTIDE SEQUENCE [LARGE SCALE GENOMIC DNA]</scope>
    <source>
        <strain>Berkeley</strain>
    </source>
</reference>
<reference key="3">
    <citation type="journal article" date="2002" name="Genome Biol.">
        <title>Annotation of the Drosophila melanogaster euchromatic genome: a systematic review.</title>
        <authorList>
            <person name="Misra S."/>
            <person name="Crosby M.A."/>
            <person name="Mungall C.J."/>
            <person name="Matthews B.B."/>
            <person name="Campbell K.S."/>
            <person name="Hradecky P."/>
            <person name="Huang Y."/>
            <person name="Kaminker J.S."/>
            <person name="Millburn G.H."/>
            <person name="Prochnik S.E."/>
            <person name="Smith C.D."/>
            <person name="Tupy J.L."/>
            <person name="Whitfield E.J."/>
            <person name="Bayraktaroglu L."/>
            <person name="Berman B.P."/>
            <person name="Bettencourt B.R."/>
            <person name="Celniker S.E."/>
            <person name="de Grey A.D.N.J."/>
            <person name="Drysdale R.A."/>
            <person name="Harris N.L."/>
            <person name="Richter J."/>
            <person name="Russo S."/>
            <person name="Schroeder A.J."/>
            <person name="Shu S.Q."/>
            <person name="Stapleton M."/>
            <person name="Yamada C."/>
            <person name="Ashburner M."/>
            <person name="Gelbart W.M."/>
            <person name="Rubin G.M."/>
            <person name="Lewis S.E."/>
        </authorList>
    </citation>
    <scope>GENOME REANNOTATION</scope>
    <source>
        <strain>Berkeley</strain>
    </source>
</reference>
<reference key="4">
    <citation type="journal article" date="2002" name="Genome Biol.">
        <title>A Drosophila full-length cDNA resource.</title>
        <authorList>
            <person name="Stapleton M."/>
            <person name="Carlson J.W."/>
            <person name="Brokstein P."/>
            <person name="Yu C."/>
            <person name="Champe M."/>
            <person name="George R.A."/>
            <person name="Guarin H."/>
            <person name="Kronmiller B."/>
            <person name="Pacleb J.M."/>
            <person name="Park S."/>
            <person name="Wan K.H."/>
            <person name="Rubin G.M."/>
            <person name="Celniker S.E."/>
        </authorList>
    </citation>
    <scope>NUCLEOTIDE SEQUENCE [LARGE SCALE MRNA]</scope>
    <source>
        <strain>Berkeley</strain>
        <tissue>Embryo</tissue>
    </source>
</reference>
<comment type="function">
    <text evidence="1">Required for normal Golgi morphology and function.</text>
</comment>
<comment type="subunit">
    <text evidence="1">Component of the conserved oligomeric Golgi complex which is composed of eight different subunits and is required for normal Golgi morphology and localization.</text>
</comment>
<comment type="subcellular location">
    <subcellularLocation>
        <location evidence="1">Golgi apparatus membrane</location>
        <topology evidence="1">Peripheral membrane protein</topology>
        <orientation evidence="1">Cytoplasmic side</orientation>
    </subcellularLocation>
</comment>
<comment type="similarity">
    <text evidence="2">Belongs to the COG2 family.</text>
</comment>
<sequence>MHDPVKKSAHLTAGSTSTAEKLCFDKNEFMKANFSVDEFLHKNRNAPSLEQLRDNLGLYLKGLRAAMIDLINEDYADFVNLSANLVGLDQNIKTIQQPLEQFRSDIESIHGLIDENVTELRAQLEEKRQLREFKRGLQSLKKVYETINKLQDLIDRKLSGEQPIKAVDLERAALDLIQLKFHEKHCFKHLSPDHQGKIQQLEEQLHQHLRRFFNDALSQARNSAPESLERCLRIYITLNACDQAECAFREDVVAPYMTGVIGEQQLQNSPQGLAGIYSKILNFISLHMTDLLRLTLYSDKFPGFNFVVNSYWSDVETRLELHMNSIFAPGNSEVFYVKYKCTRDFLGKIEELLTCSGEQAVTFYRQHKQTKSFEARWNLPVYFQICFQEIAGKFEAQLEPVLQEDSLKDNLTDSDYKISAFNAAKEAMTRCWAEGVYLPEVFPKFYKLNVQVVLRLSRWITDAITQSKGSNFSKPYTRNQLLIALHADIRKLDAHLPELQQLIIKSVPVEQCTKIFSDVLAKSMSCLADTLGAHLTNIQKTLVELLIGECETENVRQVNDLPRLYRKTNREVPTRCSSYVEQMLRPLKAFAQQNESQLGTLVVEQILAEVASHITKAYFNVVSDVLTSVQKTEESLRRLRNVKSGGAATVSTGSSAVMSDDDKIRVQLRVDVTSWRQELCKLNFQATQIDKLVELTNMVEDSIKLKDNSA</sequence>
<keyword id="KW-0333">Golgi apparatus</keyword>
<keyword id="KW-0472">Membrane</keyword>
<keyword id="KW-0653">Protein transport</keyword>
<keyword id="KW-1185">Reference proteome</keyword>
<keyword id="KW-0813">Transport</keyword>
<protein>
    <recommendedName>
        <fullName>Conserved oligomeric Golgi complex subunit 2</fullName>
        <shortName>COG complex subunit 2</shortName>
    </recommendedName>
    <alternativeName>
        <fullName evidence="3">Component of oligomeric Golgi complex 2</fullName>
    </alternativeName>
    <alternativeName>
        <fullName evidence="3">LdlCp-related protein</fullName>
    </alternativeName>
</protein>
<accession>Q9VF78</accession>
<accession>Q8SZC5</accession>
<accession>Q9XZ52</accession>
<name>COG2_DROME</name>
<gene>
    <name evidence="3" type="primary">Cog2</name>
    <name evidence="3" type="synonym">ldlCp</name>
    <name evidence="3" type="ORF">CG6177</name>
</gene>